<protein>
    <recommendedName>
        <fullName evidence="3">Indole-3-glycerol phosphate synthase, chloroplastic</fullName>
        <shortName evidence="3">IGPS</shortName>
        <ecNumber evidence="2">4.1.1.48</ecNumber>
    </recommendedName>
</protein>
<name>TRPC_ARATH</name>
<evidence type="ECO:0000255" key="1"/>
<evidence type="ECO:0000269" key="2">
    <source>
    </source>
</evidence>
<evidence type="ECO:0000303" key="3">
    <source>
    </source>
</evidence>
<evidence type="ECO:0000305" key="4"/>
<evidence type="ECO:0000305" key="5">
    <source>
    </source>
</evidence>
<evidence type="ECO:0000312" key="6">
    <source>
        <dbReference type="Araport" id="AT2G04400"/>
    </source>
</evidence>
<evidence type="ECO:0000312" key="7">
    <source>
        <dbReference type="EMBL" id="AAD25838.1"/>
    </source>
</evidence>
<keyword id="KW-0028">Amino-acid biosynthesis</keyword>
<keyword id="KW-0057">Aromatic amino acid biosynthesis</keyword>
<keyword id="KW-0150">Chloroplast</keyword>
<keyword id="KW-0210">Decarboxylase</keyword>
<keyword id="KW-0456">Lyase</keyword>
<keyword id="KW-0934">Plastid</keyword>
<keyword id="KW-1185">Reference proteome</keyword>
<keyword id="KW-0809">Transit peptide</keyword>
<keyword id="KW-0822">Tryptophan biosynthesis</keyword>
<organism>
    <name type="scientific">Arabidopsis thaliana</name>
    <name type="common">Mouse-ear cress</name>
    <dbReference type="NCBI Taxonomy" id="3702"/>
    <lineage>
        <taxon>Eukaryota</taxon>
        <taxon>Viridiplantae</taxon>
        <taxon>Streptophyta</taxon>
        <taxon>Embryophyta</taxon>
        <taxon>Tracheophyta</taxon>
        <taxon>Spermatophyta</taxon>
        <taxon>Magnoliopsida</taxon>
        <taxon>eudicotyledons</taxon>
        <taxon>Gunneridae</taxon>
        <taxon>Pentapetalae</taxon>
        <taxon>rosids</taxon>
        <taxon>malvids</taxon>
        <taxon>Brassicales</taxon>
        <taxon>Brassicaceae</taxon>
        <taxon>Camelineae</taxon>
        <taxon>Arabidopsis</taxon>
    </lineage>
</organism>
<dbReference type="EC" id="4.1.1.48" evidence="2"/>
<dbReference type="EMBL" id="AC006951">
    <property type="protein sequence ID" value="AAD25838.1"/>
    <property type="molecule type" value="Genomic_DNA"/>
</dbReference>
<dbReference type="EMBL" id="CP002685">
    <property type="protein sequence ID" value="AEC05831.1"/>
    <property type="molecule type" value="Genomic_DNA"/>
</dbReference>
<dbReference type="EMBL" id="AY086973">
    <property type="protein sequence ID" value="AAM64536.1"/>
    <property type="molecule type" value="mRNA"/>
</dbReference>
<dbReference type="EMBL" id="BT025969">
    <property type="protein sequence ID" value="ABG25058.1"/>
    <property type="molecule type" value="mRNA"/>
</dbReference>
<dbReference type="EMBL" id="U18770">
    <property type="protein sequence ID" value="AAA60380.1"/>
    <property type="status" value="ALT_INIT"/>
    <property type="molecule type" value="mRNA"/>
</dbReference>
<dbReference type="EMBL" id="AK117503">
    <property type="protein sequence ID" value="BAC42166.1"/>
    <property type="status" value="ALT_INIT"/>
    <property type="molecule type" value="mRNA"/>
</dbReference>
<dbReference type="PIR" id="B84457">
    <property type="entry name" value="B84457"/>
</dbReference>
<dbReference type="RefSeq" id="NP_178521.1">
    <property type="nucleotide sequence ID" value="NM_126473.4"/>
</dbReference>
<dbReference type="SMR" id="P49572"/>
<dbReference type="FunCoup" id="P49572">
    <property type="interactions" value="317"/>
</dbReference>
<dbReference type="IntAct" id="P49572">
    <property type="interactions" value="1"/>
</dbReference>
<dbReference type="STRING" id="3702.P49572"/>
<dbReference type="MetOSite" id="P49572"/>
<dbReference type="PaxDb" id="3702-AT2G04400.1"/>
<dbReference type="ProteomicsDB" id="232416"/>
<dbReference type="EnsemblPlants" id="AT2G04400.1">
    <property type="protein sequence ID" value="AT2G04400.1"/>
    <property type="gene ID" value="AT2G04400"/>
</dbReference>
<dbReference type="GeneID" id="814980"/>
<dbReference type="Gramene" id="AT2G04400.1">
    <property type="protein sequence ID" value="AT2G04400.1"/>
    <property type="gene ID" value="AT2G04400"/>
</dbReference>
<dbReference type="KEGG" id="ath:AT2G04400"/>
<dbReference type="Araport" id="AT2G04400"/>
<dbReference type="TAIR" id="AT2G04400">
    <property type="gene designation" value="IGPS"/>
</dbReference>
<dbReference type="eggNOG" id="KOG4201">
    <property type="taxonomic scope" value="Eukaryota"/>
</dbReference>
<dbReference type="HOGENOM" id="CLU_034247_1_0_1"/>
<dbReference type="InParanoid" id="P49572"/>
<dbReference type="OMA" id="IHYLGMN"/>
<dbReference type="PhylomeDB" id="P49572"/>
<dbReference type="BioCyc" id="ARA:AT2G04400-MONOMER"/>
<dbReference type="UniPathway" id="UPA00035">
    <property type="reaction ID" value="UER00043"/>
</dbReference>
<dbReference type="PRO" id="PR:P49572"/>
<dbReference type="Proteomes" id="UP000006548">
    <property type="component" value="Chromosome 2"/>
</dbReference>
<dbReference type="ExpressionAtlas" id="P49572">
    <property type="expression patterns" value="baseline and differential"/>
</dbReference>
<dbReference type="GO" id="GO:0009507">
    <property type="term" value="C:chloroplast"/>
    <property type="evidence" value="ECO:0007005"/>
    <property type="project" value="TAIR"/>
</dbReference>
<dbReference type="GO" id="GO:0009570">
    <property type="term" value="C:chloroplast stroma"/>
    <property type="evidence" value="ECO:0007005"/>
    <property type="project" value="TAIR"/>
</dbReference>
<dbReference type="GO" id="GO:0005507">
    <property type="term" value="F:copper ion binding"/>
    <property type="evidence" value="ECO:0007005"/>
    <property type="project" value="TAIR"/>
</dbReference>
<dbReference type="GO" id="GO:0004425">
    <property type="term" value="F:indole-3-glycerol-phosphate synthase activity"/>
    <property type="evidence" value="ECO:0007669"/>
    <property type="project" value="UniProtKB-EC"/>
</dbReference>
<dbReference type="GO" id="GO:0000162">
    <property type="term" value="P:L-tryptophan biosynthetic process"/>
    <property type="evidence" value="ECO:0000304"/>
    <property type="project" value="TAIR"/>
</dbReference>
<dbReference type="CDD" id="cd00331">
    <property type="entry name" value="IGPS"/>
    <property type="match status" value="1"/>
</dbReference>
<dbReference type="FunFam" id="3.20.20.70:FF:000146">
    <property type="entry name" value="Indole-3-glycerol phosphate synthase chloroplastic"/>
    <property type="match status" value="1"/>
</dbReference>
<dbReference type="Gene3D" id="3.20.20.70">
    <property type="entry name" value="Aldolase class I"/>
    <property type="match status" value="1"/>
</dbReference>
<dbReference type="HAMAP" id="MF_00134_B">
    <property type="entry name" value="IGPS_B"/>
    <property type="match status" value="1"/>
</dbReference>
<dbReference type="InterPro" id="IPR013785">
    <property type="entry name" value="Aldolase_TIM"/>
</dbReference>
<dbReference type="InterPro" id="IPR045186">
    <property type="entry name" value="Indole-3-glycerol_P_synth"/>
</dbReference>
<dbReference type="InterPro" id="IPR013798">
    <property type="entry name" value="Indole-3-glycerol_P_synth_dom"/>
</dbReference>
<dbReference type="InterPro" id="IPR001468">
    <property type="entry name" value="Indole-3-GlycerolPSynthase_CS"/>
</dbReference>
<dbReference type="InterPro" id="IPR011060">
    <property type="entry name" value="RibuloseP-bd_barrel"/>
</dbReference>
<dbReference type="NCBIfam" id="NF001372">
    <property type="entry name" value="PRK00278.1-4"/>
    <property type="match status" value="1"/>
</dbReference>
<dbReference type="NCBIfam" id="NF001377">
    <property type="entry name" value="PRK00278.2-4"/>
    <property type="match status" value="1"/>
</dbReference>
<dbReference type="PANTHER" id="PTHR22854:SF17">
    <property type="entry name" value="INDOLE-3-GLYCEROL PHOSPHATE SYNTHASE, CHLOROPLASTIC"/>
    <property type="match status" value="1"/>
</dbReference>
<dbReference type="PANTHER" id="PTHR22854">
    <property type="entry name" value="TRYPTOPHAN BIOSYNTHESIS PROTEIN"/>
    <property type="match status" value="1"/>
</dbReference>
<dbReference type="Pfam" id="PF00218">
    <property type="entry name" value="IGPS"/>
    <property type="match status" value="1"/>
</dbReference>
<dbReference type="SUPFAM" id="SSF51366">
    <property type="entry name" value="Ribulose-phoshate binding barrel"/>
    <property type="match status" value="1"/>
</dbReference>
<dbReference type="PROSITE" id="PS00614">
    <property type="entry name" value="IGPS"/>
    <property type="match status" value="1"/>
</dbReference>
<accession>P49572</accession>
<accession>Q1EBW5</accession>
<accession>Q8GYM9</accession>
<accession>Q8LBV5</accession>
<accession>Q9SJC9</accession>
<reference key="1">
    <citation type="journal article" date="1999" name="Nature">
        <title>Sequence and analysis of chromosome 2 of the plant Arabidopsis thaliana.</title>
        <authorList>
            <person name="Lin X."/>
            <person name="Kaul S."/>
            <person name="Rounsley S.D."/>
            <person name="Shea T.P."/>
            <person name="Benito M.-I."/>
            <person name="Town C.D."/>
            <person name="Fujii C.Y."/>
            <person name="Mason T.M."/>
            <person name="Bowman C.L."/>
            <person name="Barnstead M.E."/>
            <person name="Feldblyum T.V."/>
            <person name="Buell C.R."/>
            <person name="Ketchum K.A."/>
            <person name="Lee J.J."/>
            <person name="Ronning C.M."/>
            <person name="Koo H.L."/>
            <person name="Moffat K.S."/>
            <person name="Cronin L.A."/>
            <person name="Shen M."/>
            <person name="Pai G."/>
            <person name="Van Aken S."/>
            <person name="Umayam L."/>
            <person name="Tallon L.J."/>
            <person name="Gill J.E."/>
            <person name="Adams M.D."/>
            <person name="Carrera A.J."/>
            <person name="Creasy T.H."/>
            <person name="Goodman H.M."/>
            <person name="Somerville C.R."/>
            <person name="Copenhaver G.P."/>
            <person name="Preuss D."/>
            <person name="Nierman W.C."/>
            <person name="White O."/>
            <person name="Eisen J.A."/>
            <person name="Salzberg S.L."/>
            <person name="Fraser C.M."/>
            <person name="Venter J.C."/>
        </authorList>
    </citation>
    <scope>NUCLEOTIDE SEQUENCE [LARGE SCALE GENOMIC DNA]</scope>
    <source>
        <strain>cv. Columbia</strain>
    </source>
</reference>
<reference key="2">
    <citation type="journal article" date="2017" name="Plant J.">
        <title>Araport11: a complete reannotation of the Arabidopsis thaliana reference genome.</title>
        <authorList>
            <person name="Cheng C.Y."/>
            <person name="Krishnakumar V."/>
            <person name="Chan A.P."/>
            <person name="Thibaud-Nissen F."/>
            <person name="Schobel S."/>
            <person name="Town C.D."/>
        </authorList>
    </citation>
    <scope>GENOME REANNOTATION</scope>
    <source>
        <strain>cv. Columbia</strain>
    </source>
</reference>
<reference key="3">
    <citation type="submission" date="2002-03" db="EMBL/GenBank/DDBJ databases">
        <title>Full-length cDNA from Arabidopsis thaliana.</title>
        <authorList>
            <person name="Brover V.V."/>
            <person name="Troukhan M.E."/>
            <person name="Alexandrov N.A."/>
            <person name="Lu Y.-P."/>
            <person name="Flavell R.B."/>
            <person name="Feldmann K.A."/>
        </authorList>
    </citation>
    <scope>NUCLEOTIDE SEQUENCE [LARGE SCALE MRNA]</scope>
</reference>
<reference key="4">
    <citation type="submission" date="2006-06" db="EMBL/GenBank/DDBJ databases">
        <title>Arabidopsis ORF clones.</title>
        <authorList>
            <person name="Shinn P."/>
            <person name="Chen H."/>
            <person name="Kim C.J."/>
            <person name="Quinitio C."/>
            <person name="Ecker J.R."/>
        </authorList>
    </citation>
    <scope>NUCLEOTIDE SEQUENCE [LARGE SCALE MRNA]</scope>
    <source>
        <strain>cv. Columbia</strain>
    </source>
</reference>
<reference key="5">
    <citation type="journal article" date="1995" name="Plant Physiol.">
        <title>Isolation of cDNAs encoding the tryptophan pathway enzyme indole-3-glycerol phosphate synthase from Arabidopsis thaliana.</title>
        <authorList>
            <person name="Li J."/>
            <person name="Chen S."/>
            <person name="Zhu L."/>
            <person name="Last R.L."/>
        </authorList>
    </citation>
    <scope>NUCLEOTIDE SEQUENCE [MRNA] OF 5-402</scope>
    <scope>FUNCTION</scope>
    <scope>CATALYTIC ACTIVITY</scope>
    <scope>TISSUE SPECIFICITY</scope>
    <source>
        <strain>cv. Columbia</strain>
    </source>
</reference>
<reference key="6">
    <citation type="journal article" date="2002" name="Science">
        <title>Functional annotation of a full-length Arabidopsis cDNA collection.</title>
        <authorList>
            <person name="Seki M."/>
            <person name="Narusaka M."/>
            <person name="Kamiya A."/>
            <person name="Ishida J."/>
            <person name="Satou M."/>
            <person name="Sakurai T."/>
            <person name="Nakajima M."/>
            <person name="Enju A."/>
            <person name="Akiyama K."/>
            <person name="Oono Y."/>
            <person name="Muramatsu M."/>
            <person name="Hayashizaki Y."/>
            <person name="Kawai J."/>
            <person name="Carninci P."/>
            <person name="Itoh M."/>
            <person name="Ishii Y."/>
            <person name="Arakawa T."/>
            <person name="Shibata K."/>
            <person name="Shinagawa A."/>
            <person name="Shinozaki K."/>
        </authorList>
    </citation>
    <scope>NUCLEOTIDE SEQUENCE [LARGE SCALE MRNA] OF 89-402</scope>
    <source>
        <strain>cv. Columbia</strain>
    </source>
</reference>
<sequence length="402" mass="44577">MEGLVPVQRLPIKVASPSLYRCNNSVSIRRSISGFAMDRKINFRAPSQFSIRAQQSDLKESLAVSSSSVEDKGNVLRIKEWEVEMYQEELAISQGIRIRRKPPSKAPLGYSGPFELRLHNNDADSPRNILEEITWYKDVEVSRMKELNPLDVLKKAVEDAPPTRDFVGALRMAHKRTGFPGLIAEVKKASPSRGILKENFDPVEIAQAYEKGGAACLSVLTDQKYFQGGFENLEAIRSAGVKCPLLCKEFVVDPWQIYYARTKGADAVLLIAAVLADLEITFLLKICKKLSLAALVEVHDEREMGRVLGIEGIELVGINNRSLETFEVDISNTKKLLEGEHGRQIRERDMIVVGESGLFTPDDIAYVQAAGVKAVLVGESIVKQNDPEKGIAGLFGRNISHT</sequence>
<feature type="transit peptide" description="Chloroplast" evidence="1">
    <location>
        <begin position="1"/>
        <end position="65"/>
    </location>
</feature>
<feature type="chain" id="PRO_0000035787" description="Indole-3-glycerol phosphate synthase, chloroplastic">
    <location>
        <begin position="66"/>
        <end position="402"/>
    </location>
</feature>
<feature type="sequence conflict" description="In Ref. 5; AAA60380." evidence="4" ref="5">
    <original>T</original>
    <variation>P</variation>
    <location>
        <position position="177"/>
    </location>
</feature>
<feature type="sequence conflict" description="In Ref. 3; AAM64536." evidence="4" ref="3">
    <original>F</original>
    <variation>Y</variation>
    <location>
        <position position="250"/>
    </location>
</feature>
<feature type="sequence conflict" description="In Ref. 3; AAM64536." evidence="4" ref="3">
    <original>A</original>
    <variation>T</variation>
    <location>
        <position position="276"/>
    </location>
</feature>
<feature type="sequence conflict" description="In Ref. 5; AAA60380." evidence="4" ref="5">
    <original>L</original>
    <variation>LAL</variation>
    <location>
        <position position="337"/>
    </location>
</feature>
<proteinExistence type="evidence at protein level"/>
<gene>
    <name evidence="3" type="primary">IGPS</name>
    <name evidence="6" type="ordered locus">At2g04400</name>
    <name evidence="7" type="ORF">T1O3.19</name>
</gene>
<comment type="function">
    <text evidence="2">Indole-3-glycerol phosphate synthase required for tryptophan biosynthesis.</text>
</comment>
<comment type="catalytic activity">
    <reaction evidence="2">
        <text>1-(2-carboxyphenylamino)-1-deoxy-D-ribulose 5-phosphate + H(+) = (1S,2R)-1-C-(indol-3-yl)glycerol 3-phosphate + CO2 + H2O</text>
        <dbReference type="Rhea" id="RHEA:23476"/>
        <dbReference type="ChEBI" id="CHEBI:15377"/>
        <dbReference type="ChEBI" id="CHEBI:15378"/>
        <dbReference type="ChEBI" id="CHEBI:16526"/>
        <dbReference type="ChEBI" id="CHEBI:58613"/>
        <dbReference type="ChEBI" id="CHEBI:58866"/>
        <dbReference type="EC" id="4.1.1.48"/>
    </reaction>
</comment>
<comment type="pathway">
    <text>Amino-acid biosynthesis; L-tryptophan biosynthesis; L-tryptophan from chorismate: step 4/5.</text>
</comment>
<comment type="subcellular location">
    <subcellularLocation>
        <location evidence="5">Plastid</location>
        <location evidence="5">Chloroplast</location>
    </subcellularLocation>
</comment>
<comment type="tissue specificity">
    <text evidence="2">Expressed in leaves.</text>
</comment>
<comment type="similarity">
    <text evidence="4">Belongs to the TrpC family.</text>
</comment>
<comment type="sequence caution" evidence="4">
    <conflict type="erroneous initiation">
        <sequence resource="EMBL-CDS" id="AAA60380"/>
    </conflict>
    <text>Truncated N-terminus.</text>
</comment>
<comment type="sequence caution" evidence="4">
    <conflict type="erroneous initiation">
        <sequence resource="EMBL-CDS" id="BAC42166"/>
    </conflict>
    <text>Truncated N-terminus.</text>
</comment>